<organism>
    <name type="scientific">Staphylococcus aureus (strain MW2)</name>
    <dbReference type="NCBI Taxonomy" id="196620"/>
    <lineage>
        <taxon>Bacteria</taxon>
        <taxon>Bacillati</taxon>
        <taxon>Bacillota</taxon>
        <taxon>Bacilli</taxon>
        <taxon>Bacillales</taxon>
        <taxon>Staphylococcaceae</taxon>
        <taxon>Staphylococcus</taxon>
    </lineage>
</organism>
<sequence length="332" mass="36526">MTLLTRIKTETILLESDIKELIDILISPSIGTDIKYELLSSYSEREIQQQELTYIVRSLINTMYPHQPCYEGAMCVCGTGGDKSNSFNISTTVAFVVASAGVKVIKHGNKSITSNSGSTDLLNQMNIQTTTVDDTPNQLNEKDLVFIGATESYPIMKYMQPVRKMIGKPTILNLVGPLINPYHLTYQMVGVFDPTKLKLVAKTIKDLGRKRAIVLHGANGMDEATLSGDNLIYELTEDGEIKNYTLNATDYGLKHAPNSDFKGGSPEENLAISLNILNGKDQSSRRDVVLLNAGLSLYVAEKVDTIAEGIELATTLIDNGEALKKYHQMRGE</sequence>
<accession>P66998</accession>
<accession>Q99UB2</accession>
<feature type="chain" id="PRO_0000154483" description="Anthranilate phosphoribosyltransferase">
    <location>
        <begin position="1"/>
        <end position="332"/>
    </location>
</feature>
<feature type="binding site" evidence="1">
    <location>
        <position position="78"/>
    </location>
    <ligand>
        <name>5-phospho-alpha-D-ribose 1-diphosphate</name>
        <dbReference type="ChEBI" id="CHEBI:58017"/>
    </ligand>
</feature>
<feature type="binding site" evidence="1">
    <location>
        <position position="78"/>
    </location>
    <ligand>
        <name>anthranilate</name>
        <dbReference type="ChEBI" id="CHEBI:16567"/>
        <label>1</label>
    </ligand>
</feature>
<feature type="binding site" evidence="1">
    <location>
        <begin position="81"/>
        <end position="82"/>
    </location>
    <ligand>
        <name>5-phospho-alpha-D-ribose 1-diphosphate</name>
        <dbReference type="ChEBI" id="CHEBI:58017"/>
    </ligand>
</feature>
<feature type="binding site" evidence="1">
    <location>
        <position position="86"/>
    </location>
    <ligand>
        <name>5-phospho-alpha-D-ribose 1-diphosphate</name>
        <dbReference type="ChEBI" id="CHEBI:58017"/>
    </ligand>
</feature>
<feature type="binding site" evidence="1">
    <location>
        <begin position="88"/>
        <end position="91"/>
    </location>
    <ligand>
        <name>5-phospho-alpha-D-ribose 1-diphosphate</name>
        <dbReference type="ChEBI" id="CHEBI:58017"/>
    </ligand>
</feature>
<feature type="binding site" evidence="1">
    <location>
        <position position="90"/>
    </location>
    <ligand>
        <name>Mg(2+)</name>
        <dbReference type="ChEBI" id="CHEBI:18420"/>
        <label>1</label>
    </ligand>
</feature>
<feature type="binding site" evidence="1">
    <location>
        <begin position="106"/>
        <end position="114"/>
    </location>
    <ligand>
        <name>5-phospho-alpha-D-ribose 1-diphosphate</name>
        <dbReference type="ChEBI" id="CHEBI:58017"/>
    </ligand>
</feature>
<feature type="binding site" evidence="1">
    <location>
        <position position="109"/>
    </location>
    <ligand>
        <name>anthranilate</name>
        <dbReference type="ChEBI" id="CHEBI:16567"/>
        <label>1</label>
    </ligand>
</feature>
<feature type="binding site" evidence="1">
    <location>
        <position position="118"/>
    </location>
    <ligand>
        <name>5-phospho-alpha-D-ribose 1-diphosphate</name>
        <dbReference type="ChEBI" id="CHEBI:58017"/>
    </ligand>
</feature>
<feature type="binding site" evidence="1">
    <location>
        <position position="163"/>
    </location>
    <ligand>
        <name>anthranilate</name>
        <dbReference type="ChEBI" id="CHEBI:16567"/>
        <label>2</label>
    </ligand>
</feature>
<feature type="binding site" evidence="1">
    <location>
        <position position="222"/>
    </location>
    <ligand>
        <name>Mg(2+)</name>
        <dbReference type="ChEBI" id="CHEBI:18420"/>
        <label>2</label>
    </ligand>
</feature>
<feature type="binding site" evidence="1">
    <location>
        <position position="223"/>
    </location>
    <ligand>
        <name>Mg(2+)</name>
        <dbReference type="ChEBI" id="CHEBI:18420"/>
        <label>1</label>
    </ligand>
</feature>
<feature type="binding site" evidence="1">
    <location>
        <position position="223"/>
    </location>
    <ligand>
        <name>Mg(2+)</name>
        <dbReference type="ChEBI" id="CHEBI:18420"/>
        <label>2</label>
    </ligand>
</feature>
<proteinExistence type="inferred from homology"/>
<name>TRPD_STAAW</name>
<evidence type="ECO:0000255" key="1">
    <source>
        <dbReference type="HAMAP-Rule" id="MF_00211"/>
    </source>
</evidence>
<protein>
    <recommendedName>
        <fullName evidence="1">Anthranilate phosphoribosyltransferase</fullName>
        <ecNumber evidence="1">2.4.2.18</ecNumber>
    </recommendedName>
</protein>
<reference key="1">
    <citation type="journal article" date="2002" name="Lancet">
        <title>Genome and virulence determinants of high virulence community-acquired MRSA.</title>
        <authorList>
            <person name="Baba T."/>
            <person name="Takeuchi F."/>
            <person name="Kuroda M."/>
            <person name="Yuzawa H."/>
            <person name="Aoki K."/>
            <person name="Oguchi A."/>
            <person name="Nagai Y."/>
            <person name="Iwama N."/>
            <person name="Asano K."/>
            <person name="Naimi T."/>
            <person name="Kuroda H."/>
            <person name="Cui L."/>
            <person name="Yamamoto K."/>
            <person name="Hiramatsu K."/>
        </authorList>
    </citation>
    <scope>NUCLEOTIDE SEQUENCE [LARGE SCALE GENOMIC DNA]</scope>
    <source>
        <strain>MW2</strain>
    </source>
</reference>
<comment type="function">
    <text evidence="1">Catalyzes the transfer of the phosphoribosyl group of 5-phosphorylribose-1-pyrophosphate (PRPP) to anthranilate to yield N-(5'-phosphoribosyl)-anthranilate (PRA).</text>
</comment>
<comment type="catalytic activity">
    <reaction evidence="1">
        <text>N-(5-phospho-beta-D-ribosyl)anthranilate + diphosphate = 5-phospho-alpha-D-ribose 1-diphosphate + anthranilate</text>
        <dbReference type="Rhea" id="RHEA:11768"/>
        <dbReference type="ChEBI" id="CHEBI:16567"/>
        <dbReference type="ChEBI" id="CHEBI:18277"/>
        <dbReference type="ChEBI" id="CHEBI:33019"/>
        <dbReference type="ChEBI" id="CHEBI:58017"/>
        <dbReference type="EC" id="2.4.2.18"/>
    </reaction>
</comment>
<comment type="cofactor">
    <cofactor evidence="1">
        <name>Mg(2+)</name>
        <dbReference type="ChEBI" id="CHEBI:18420"/>
    </cofactor>
    <text evidence="1">Binds 2 magnesium ions per monomer.</text>
</comment>
<comment type="pathway">
    <text evidence="1">Amino-acid biosynthesis; L-tryptophan biosynthesis; L-tryptophan from chorismate: step 2/5.</text>
</comment>
<comment type="subunit">
    <text evidence="1">Homodimer.</text>
</comment>
<comment type="similarity">
    <text evidence="1">Belongs to the anthranilate phosphoribosyltransferase family.</text>
</comment>
<keyword id="KW-0028">Amino-acid biosynthesis</keyword>
<keyword id="KW-0057">Aromatic amino acid biosynthesis</keyword>
<keyword id="KW-0328">Glycosyltransferase</keyword>
<keyword id="KW-0460">Magnesium</keyword>
<keyword id="KW-0479">Metal-binding</keyword>
<keyword id="KW-0808">Transferase</keyword>
<keyword id="KW-0822">Tryptophan biosynthesis</keyword>
<dbReference type="EC" id="2.4.2.18" evidence="1"/>
<dbReference type="EMBL" id="BA000033">
    <property type="protein sequence ID" value="BAB95121.1"/>
    <property type="molecule type" value="Genomic_DNA"/>
</dbReference>
<dbReference type="RefSeq" id="WP_000173833.1">
    <property type="nucleotide sequence ID" value="NC_003923.1"/>
</dbReference>
<dbReference type="SMR" id="P66998"/>
<dbReference type="KEGG" id="sam:MW1256"/>
<dbReference type="HOGENOM" id="CLU_034315_3_0_9"/>
<dbReference type="UniPathway" id="UPA00035">
    <property type="reaction ID" value="UER00041"/>
</dbReference>
<dbReference type="GO" id="GO:0005829">
    <property type="term" value="C:cytosol"/>
    <property type="evidence" value="ECO:0007669"/>
    <property type="project" value="TreeGrafter"/>
</dbReference>
<dbReference type="GO" id="GO:0004048">
    <property type="term" value="F:anthranilate phosphoribosyltransferase activity"/>
    <property type="evidence" value="ECO:0007669"/>
    <property type="project" value="UniProtKB-UniRule"/>
</dbReference>
<dbReference type="GO" id="GO:0000287">
    <property type="term" value="F:magnesium ion binding"/>
    <property type="evidence" value="ECO:0007669"/>
    <property type="project" value="UniProtKB-UniRule"/>
</dbReference>
<dbReference type="GO" id="GO:0000162">
    <property type="term" value="P:L-tryptophan biosynthetic process"/>
    <property type="evidence" value="ECO:0007669"/>
    <property type="project" value="UniProtKB-UniRule"/>
</dbReference>
<dbReference type="FunFam" id="3.40.1030.10:FF:000009">
    <property type="entry name" value="Anthranilate phosphoribosyltransferase"/>
    <property type="match status" value="1"/>
</dbReference>
<dbReference type="Gene3D" id="3.40.1030.10">
    <property type="entry name" value="Nucleoside phosphorylase/phosphoribosyltransferase catalytic domain"/>
    <property type="match status" value="1"/>
</dbReference>
<dbReference type="HAMAP" id="MF_00211">
    <property type="entry name" value="TrpD"/>
    <property type="match status" value="1"/>
</dbReference>
<dbReference type="InterPro" id="IPR005940">
    <property type="entry name" value="Anthranilate_Pribosyl_Tfrase"/>
</dbReference>
<dbReference type="InterPro" id="IPR000312">
    <property type="entry name" value="Glycosyl_Trfase_fam3"/>
</dbReference>
<dbReference type="InterPro" id="IPR035902">
    <property type="entry name" value="Nuc_phospho_transferase"/>
</dbReference>
<dbReference type="NCBIfam" id="TIGR01245">
    <property type="entry name" value="trpD"/>
    <property type="match status" value="1"/>
</dbReference>
<dbReference type="PANTHER" id="PTHR43285">
    <property type="entry name" value="ANTHRANILATE PHOSPHORIBOSYLTRANSFERASE"/>
    <property type="match status" value="1"/>
</dbReference>
<dbReference type="PANTHER" id="PTHR43285:SF2">
    <property type="entry name" value="ANTHRANILATE PHOSPHORIBOSYLTRANSFERASE"/>
    <property type="match status" value="1"/>
</dbReference>
<dbReference type="Pfam" id="PF00591">
    <property type="entry name" value="Glycos_transf_3"/>
    <property type="match status" value="1"/>
</dbReference>
<dbReference type="SUPFAM" id="SSF52418">
    <property type="entry name" value="Nucleoside phosphorylase/phosphoribosyltransferase catalytic domain"/>
    <property type="match status" value="1"/>
</dbReference>
<gene>
    <name evidence="1" type="primary">trpD</name>
    <name type="ordered locus">MW1256</name>
</gene>